<protein>
    <recommendedName>
        <fullName>Beta-glucosidase 11</fullName>
        <shortName>Os4bglu11</shortName>
        <ecNumber evidence="2">3.2.1.21</ecNumber>
    </recommendedName>
</protein>
<comment type="catalytic activity">
    <reaction evidence="2">
        <text>Hydrolysis of terminal, non-reducing beta-D-glucosyl residues with release of beta-D-glucose.</text>
        <dbReference type="EC" id="3.2.1.21"/>
    </reaction>
</comment>
<comment type="similarity">
    <text evidence="7">Belongs to the glycosyl hydrolase 1 family.</text>
</comment>
<proteinExistence type="inferred from homology"/>
<feature type="signal peptide" evidence="5">
    <location>
        <begin position="1"/>
        <end position="25"/>
    </location>
</feature>
<feature type="chain" id="PRO_0000390328" description="Beta-glucosidase 11">
    <location>
        <begin position="26"/>
        <end position="529"/>
    </location>
</feature>
<feature type="active site" description="Proton donor" evidence="3">
    <location>
        <position position="203"/>
    </location>
</feature>
<feature type="active site" description="Nucleophile" evidence="3">
    <location>
        <position position="417"/>
    </location>
</feature>
<feature type="binding site" evidence="3">
    <location>
        <position position="54"/>
    </location>
    <ligand>
        <name>a beta-D-glucoside</name>
        <dbReference type="ChEBI" id="CHEBI:22798"/>
    </ligand>
</feature>
<feature type="binding site" evidence="3">
    <location>
        <position position="157"/>
    </location>
    <ligand>
        <name>a beta-D-glucoside</name>
        <dbReference type="ChEBI" id="CHEBI:22798"/>
    </ligand>
</feature>
<feature type="binding site" evidence="3">
    <location>
        <begin position="202"/>
        <end position="203"/>
    </location>
    <ligand>
        <name>a beta-D-glucoside</name>
        <dbReference type="ChEBI" id="CHEBI:22798"/>
    </ligand>
</feature>
<feature type="binding site" evidence="3">
    <location>
        <position position="346"/>
    </location>
    <ligand>
        <name>a beta-D-glucoside</name>
        <dbReference type="ChEBI" id="CHEBI:22798"/>
    </ligand>
</feature>
<feature type="binding site" evidence="4">
    <location>
        <position position="417"/>
    </location>
    <ligand>
        <name>a beta-D-glucoside</name>
        <dbReference type="ChEBI" id="CHEBI:22798"/>
    </ligand>
</feature>
<feature type="binding site" evidence="3">
    <location>
        <position position="466"/>
    </location>
    <ligand>
        <name>a beta-D-glucoside</name>
        <dbReference type="ChEBI" id="CHEBI:22798"/>
    </ligand>
</feature>
<feature type="binding site" evidence="3">
    <location>
        <begin position="473"/>
        <end position="474"/>
    </location>
    <ligand>
        <name>a beta-D-glucoside</name>
        <dbReference type="ChEBI" id="CHEBI:22798"/>
    </ligand>
</feature>
<feature type="binding site" evidence="1">
    <location>
        <position position="482"/>
    </location>
    <ligand>
        <name>a beta-D-glucoside</name>
        <dbReference type="ChEBI" id="CHEBI:22798"/>
    </ligand>
</feature>
<feature type="glycosylation site" description="N-linked (GlcNAc...) asparagine" evidence="6">
    <location>
        <position position="361"/>
    </location>
</feature>
<feature type="glycosylation site" description="N-linked (GlcNAc...) asparagine" evidence="6">
    <location>
        <position position="425"/>
    </location>
</feature>
<feature type="disulfide bond" evidence="3">
    <location>
        <begin position="222"/>
        <end position="230"/>
    </location>
</feature>
<reference key="1">
    <citation type="journal article" date="2002" name="Nature">
        <title>Sequence and analysis of rice chromosome 4.</title>
        <authorList>
            <person name="Feng Q."/>
            <person name="Zhang Y."/>
            <person name="Hao P."/>
            <person name="Wang S."/>
            <person name="Fu G."/>
            <person name="Huang Y."/>
            <person name="Li Y."/>
            <person name="Zhu J."/>
            <person name="Liu Y."/>
            <person name="Hu X."/>
            <person name="Jia P."/>
            <person name="Zhang Y."/>
            <person name="Zhao Q."/>
            <person name="Ying K."/>
            <person name="Yu S."/>
            <person name="Tang Y."/>
            <person name="Weng Q."/>
            <person name="Zhang L."/>
            <person name="Lu Y."/>
            <person name="Mu J."/>
            <person name="Lu Y."/>
            <person name="Zhang L.S."/>
            <person name="Yu Z."/>
            <person name="Fan D."/>
            <person name="Liu X."/>
            <person name="Lu T."/>
            <person name="Li C."/>
            <person name="Wu Y."/>
            <person name="Sun T."/>
            <person name="Lei H."/>
            <person name="Li T."/>
            <person name="Hu H."/>
            <person name="Guan J."/>
            <person name="Wu M."/>
            <person name="Zhang R."/>
            <person name="Zhou B."/>
            <person name="Chen Z."/>
            <person name="Chen L."/>
            <person name="Jin Z."/>
            <person name="Wang R."/>
            <person name="Yin H."/>
            <person name="Cai Z."/>
            <person name="Ren S."/>
            <person name="Lv G."/>
            <person name="Gu W."/>
            <person name="Zhu G."/>
            <person name="Tu Y."/>
            <person name="Jia J."/>
            <person name="Zhang Y."/>
            <person name="Chen J."/>
            <person name="Kang H."/>
            <person name="Chen X."/>
            <person name="Shao C."/>
            <person name="Sun Y."/>
            <person name="Hu Q."/>
            <person name="Zhang X."/>
            <person name="Zhang W."/>
            <person name="Wang L."/>
            <person name="Ding C."/>
            <person name="Sheng H."/>
            <person name="Gu J."/>
            <person name="Chen S."/>
            <person name="Ni L."/>
            <person name="Zhu F."/>
            <person name="Chen W."/>
            <person name="Lan L."/>
            <person name="Lai Y."/>
            <person name="Cheng Z."/>
            <person name="Gu M."/>
            <person name="Jiang J."/>
            <person name="Li J."/>
            <person name="Hong G."/>
            <person name="Xue Y."/>
            <person name="Han B."/>
        </authorList>
    </citation>
    <scope>NUCLEOTIDE SEQUENCE [LARGE SCALE GENOMIC DNA]</scope>
    <source>
        <strain>cv. Nipponbare</strain>
    </source>
</reference>
<reference key="2">
    <citation type="journal article" date="2005" name="Nature">
        <title>The map-based sequence of the rice genome.</title>
        <authorList>
            <consortium name="International rice genome sequencing project (IRGSP)"/>
        </authorList>
    </citation>
    <scope>NUCLEOTIDE SEQUENCE [LARGE SCALE GENOMIC DNA]</scope>
    <source>
        <strain>cv. Nipponbare</strain>
    </source>
</reference>
<reference key="3">
    <citation type="journal article" date="2013" name="Rice">
        <title>Improvement of the Oryza sativa Nipponbare reference genome using next generation sequence and optical map data.</title>
        <authorList>
            <person name="Kawahara Y."/>
            <person name="de la Bastide M."/>
            <person name="Hamilton J.P."/>
            <person name="Kanamori H."/>
            <person name="McCombie W.R."/>
            <person name="Ouyang S."/>
            <person name="Schwartz D.C."/>
            <person name="Tanaka T."/>
            <person name="Wu J."/>
            <person name="Zhou S."/>
            <person name="Childs K.L."/>
            <person name="Davidson R.M."/>
            <person name="Lin H."/>
            <person name="Quesada-Ocampo L."/>
            <person name="Vaillancourt B."/>
            <person name="Sakai H."/>
            <person name="Lee S.S."/>
            <person name="Kim J."/>
            <person name="Numa H."/>
            <person name="Itoh T."/>
            <person name="Buell C.R."/>
            <person name="Matsumoto T."/>
        </authorList>
    </citation>
    <scope>GENOME REANNOTATION</scope>
    <source>
        <strain>cv. Nipponbare</strain>
    </source>
</reference>
<reference key="4">
    <citation type="journal article" date="2006" name="BMC Plant Biol.">
        <title>Analysis of rice glycosyl hydrolase family 1 and expression of Os4bglu12 beta-glucosidase.</title>
        <authorList>
            <person name="Opassiri R."/>
            <person name="Pomthong B."/>
            <person name="Onkoksoong T."/>
            <person name="Akiyama T."/>
            <person name="Esen A."/>
            <person name="Ketudat Cairns J.R."/>
        </authorList>
    </citation>
    <scope>GENE FAMILY</scope>
    <scope>NOMENCLATURE</scope>
</reference>
<name>BGL11_ORYSJ</name>
<dbReference type="EC" id="3.2.1.21" evidence="2"/>
<dbReference type="EMBL" id="AL731582">
    <property type="protein sequence ID" value="CAE05482.2"/>
    <property type="molecule type" value="Genomic_DNA"/>
</dbReference>
<dbReference type="EMBL" id="AP014960">
    <property type="status" value="NOT_ANNOTATED_CDS"/>
    <property type="molecule type" value="Genomic_DNA"/>
</dbReference>
<dbReference type="SMR" id="Q7XKV5"/>
<dbReference type="FunCoup" id="Q7XKV5">
    <property type="interactions" value="457"/>
</dbReference>
<dbReference type="STRING" id="39947.Q7XKV5"/>
<dbReference type="CAZy" id="GH1">
    <property type="family name" value="Glycoside Hydrolase Family 1"/>
</dbReference>
<dbReference type="GlyCosmos" id="Q7XKV5">
    <property type="glycosylation" value="2 sites, No reported glycans"/>
</dbReference>
<dbReference type="PaxDb" id="39947-Q7XKV5"/>
<dbReference type="eggNOG" id="KOG0626">
    <property type="taxonomic scope" value="Eukaryota"/>
</dbReference>
<dbReference type="InParanoid" id="Q7XKV5"/>
<dbReference type="Proteomes" id="UP000000763">
    <property type="component" value="Chromosome 4"/>
</dbReference>
<dbReference type="Proteomes" id="UP000059680">
    <property type="component" value="Chromosome 4"/>
</dbReference>
<dbReference type="GO" id="GO:0033907">
    <property type="term" value="F:beta-D-fucosidase activity"/>
    <property type="evidence" value="ECO:0007669"/>
    <property type="project" value="UniProtKB-ARBA"/>
</dbReference>
<dbReference type="GO" id="GO:0004565">
    <property type="term" value="F:beta-galactosidase activity"/>
    <property type="evidence" value="ECO:0007669"/>
    <property type="project" value="UniProtKB-ARBA"/>
</dbReference>
<dbReference type="GO" id="GO:0008422">
    <property type="term" value="F:beta-glucosidase activity"/>
    <property type="evidence" value="ECO:0000318"/>
    <property type="project" value="GO_Central"/>
</dbReference>
<dbReference type="GO" id="GO:0005975">
    <property type="term" value="P:carbohydrate metabolic process"/>
    <property type="evidence" value="ECO:0007669"/>
    <property type="project" value="InterPro"/>
</dbReference>
<dbReference type="FunFam" id="3.20.20.80:FF:000020">
    <property type="entry name" value="Beta-glucosidase 12"/>
    <property type="match status" value="1"/>
</dbReference>
<dbReference type="Gene3D" id="3.20.20.80">
    <property type="entry name" value="Glycosidases"/>
    <property type="match status" value="1"/>
</dbReference>
<dbReference type="InterPro" id="IPR001360">
    <property type="entry name" value="Glyco_hydro_1"/>
</dbReference>
<dbReference type="InterPro" id="IPR033132">
    <property type="entry name" value="Glyco_hydro_1_N_CS"/>
</dbReference>
<dbReference type="InterPro" id="IPR017853">
    <property type="entry name" value="Glycoside_hydrolase_SF"/>
</dbReference>
<dbReference type="PANTHER" id="PTHR10353:SF154">
    <property type="entry name" value="BETA-GLUCOSIDASE 9-RELATED"/>
    <property type="match status" value="1"/>
</dbReference>
<dbReference type="PANTHER" id="PTHR10353">
    <property type="entry name" value="GLYCOSYL HYDROLASE"/>
    <property type="match status" value="1"/>
</dbReference>
<dbReference type="Pfam" id="PF00232">
    <property type="entry name" value="Glyco_hydro_1"/>
    <property type="match status" value="1"/>
</dbReference>
<dbReference type="PRINTS" id="PR00131">
    <property type="entry name" value="GLHYDRLASE1"/>
</dbReference>
<dbReference type="SUPFAM" id="SSF51445">
    <property type="entry name" value="(Trans)glycosidases"/>
    <property type="match status" value="1"/>
</dbReference>
<dbReference type="PROSITE" id="PS00653">
    <property type="entry name" value="GLYCOSYL_HYDROL_F1_2"/>
    <property type="match status" value="1"/>
</dbReference>
<evidence type="ECO:0000250" key="1">
    <source>
        <dbReference type="UniProtKB" id="Q1XH05"/>
    </source>
</evidence>
<evidence type="ECO:0000250" key="2">
    <source>
        <dbReference type="UniProtKB" id="Q75I94"/>
    </source>
</evidence>
<evidence type="ECO:0000250" key="3">
    <source>
        <dbReference type="UniProtKB" id="Q7XSK0"/>
    </source>
</evidence>
<evidence type="ECO:0000250" key="4">
    <source>
        <dbReference type="UniProtKB" id="Q9SPP9"/>
    </source>
</evidence>
<evidence type="ECO:0000255" key="5"/>
<evidence type="ECO:0000255" key="6">
    <source>
        <dbReference type="PROSITE-ProRule" id="PRU00498"/>
    </source>
</evidence>
<evidence type="ECO:0000305" key="7"/>
<sequence length="529" mass="59778">MAVAGAMVMSGALLLLHLLAFTCVACNGGSELPPISRRSFPKGFIFGTSSSSYQFEGGAVLGGRGPSIWDTFTHQSPDKITDRSNGDVACDSYHLYKEDVRSMKEMGMDAYRFSISWSRILPSALSGGVNREGISYYNNLINELLSKGVQPFVTLFHWDSPQALEDKYKGFLSPNIINDYKEYAETCFKEFGDRVKHWITFNEPWTFCSMGYASGIMAPGRCSSWEVGKCRVGDSGREPYTACHHQLLAHAETVRLYKEKYQALQKGKIGIILNADWFVPLSQSKSSSDAARRALDFMLGWFMDPLIRGDYPLSMRELVGNRLPEFSKEQSGMVKGAFDFIGLNYYTSSYADNDPPSHGHNNSYNTDAHAKITGSRNGIPIGPQAASFWFHIYPEGICEMLLYVKENYGNPTIYITENGVDEVNNKTMPLEEALKDDTRIEYYHKHLLALLSAMRDGANVKGYFAWSLLDNFEWAEGYTVRFGINFVDYDDGMKRYPKNSARWFKKFLQKSNRDGNKRLKRVAYNAFSN</sequence>
<organism>
    <name type="scientific">Oryza sativa subsp. japonica</name>
    <name type="common">Rice</name>
    <dbReference type="NCBI Taxonomy" id="39947"/>
    <lineage>
        <taxon>Eukaryota</taxon>
        <taxon>Viridiplantae</taxon>
        <taxon>Streptophyta</taxon>
        <taxon>Embryophyta</taxon>
        <taxon>Tracheophyta</taxon>
        <taxon>Spermatophyta</taxon>
        <taxon>Magnoliopsida</taxon>
        <taxon>Liliopsida</taxon>
        <taxon>Poales</taxon>
        <taxon>Poaceae</taxon>
        <taxon>BOP clade</taxon>
        <taxon>Oryzoideae</taxon>
        <taxon>Oryzeae</taxon>
        <taxon>Oryzinae</taxon>
        <taxon>Oryza</taxon>
        <taxon>Oryza sativa</taxon>
    </lineage>
</organism>
<keyword id="KW-1015">Disulfide bond</keyword>
<keyword id="KW-0325">Glycoprotein</keyword>
<keyword id="KW-0326">Glycosidase</keyword>
<keyword id="KW-0378">Hydrolase</keyword>
<keyword id="KW-1185">Reference proteome</keyword>
<keyword id="KW-0732">Signal</keyword>
<accession>Q7XKV5</accession>
<gene>
    <name type="primary">BGLU11</name>
    <name type="ordered locus">Os04g0474700</name>
    <name type="ordered locus">Os04g0474600</name>
    <name type="ordered locus">LOC_Os04g39864</name>
    <name type="ORF">OSJNBa0022H21.2</name>
</gene>